<name>DPH1_CANGA</name>
<dbReference type="EC" id="2.5.1.108" evidence="2"/>
<dbReference type="EMBL" id="CR380953">
    <property type="protein sequence ID" value="CAG59410.1"/>
    <property type="molecule type" value="Genomic_DNA"/>
</dbReference>
<dbReference type="RefSeq" id="XP_446483.1">
    <property type="nucleotide sequence ID" value="XM_446483.1"/>
</dbReference>
<dbReference type="SMR" id="Q6FTG1"/>
<dbReference type="FunCoup" id="Q6FTG1">
    <property type="interactions" value="670"/>
</dbReference>
<dbReference type="STRING" id="284593.Q6FTG1"/>
<dbReference type="EnsemblFungi" id="CAGL0G02761g-T">
    <property type="protein sequence ID" value="CAGL0G02761g-T-p1"/>
    <property type="gene ID" value="CAGL0G02761g"/>
</dbReference>
<dbReference type="KEGG" id="cgr:2888069"/>
<dbReference type="CGD" id="CAL0130727">
    <property type="gene designation" value="CAGL0G02761g"/>
</dbReference>
<dbReference type="VEuPathDB" id="FungiDB:B1J91_G02761g"/>
<dbReference type="VEuPathDB" id="FungiDB:CAGL0G02761g"/>
<dbReference type="eggNOG" id="KOG2648">
    <property type="taxonomic scope" value="Eukaryota"/>
</dbReference>
<dbReference type="HOGENOM" id="CLU_037146_1_1_1"/>
<dbReference type="InParanoid" id="Q6FTG1"/>
<dbReference type="UniPathway" id="UPA00559"/>
<dbReference type="Proteomes" id="UP000002428">
    <property type="component" value="Chromosome G"/>
</dbReference>
<dbReference type="GO" id="GO:0120513">
    <property type="term" value="C:2-(3-amino-3-carboxypropyl)histidine synthase complex"/>
    <property type="evidence" value="ECO:0000250"/>
    <property type="project" value="UniProtKB"/>
</dbReference>
<dbReference type="GO" id="GO:0005737">
    <property type="term" value="C:cytoplasm"/>
    <property type="evidence" value="ECO:0007669"/>
    <property type="project" value="UniProtKB-SubCell"/>
</dbReference>
<dbReference type="GO" id="GO:0090560">
    <property type="term" value="F:2-(3-amino-3-carboxypropyl)histidine synthase activity"/>
    <property type="evidence" value="ECO:0007669"/>
    <property type="project" value="UniProtKB-EC"/>
</dbReference>
<dbReference type="GO" id="GO:0051539">
    <property type="term" value="F:4 iron, 4 sulfur cluster binding"/>
    <property type="evidence" value="ECO:0000250"/>
    <property type="project" value="UniProtKB"/>
</dbReference>
<dbReference type="GO" id="GO:0046872">
    <property type="term" value="F:metal ion binding"/>
    <property type="evidence" value="ECO:0007669"/>
    <property type="project" value="UniProtKB-KW"/>
</dbReference>
<dbReference type="GO" id="GO:0017183">
    <property type="term" value="P:protein histidyl modification to diphthamide"/>
    <property type="evidence" value="ECO:0000250"/>
    <property type="project" value="UniProtKB"/>
</dbReference>
<dbReference type="FunFam" id="3.40.50.11840:FF:000001">
    <property type="entry name" value="2-(3-amino-3-carboxypropyl)histidine synthase subunit 1"/>
    <property type="match status" value="1"/>
</dbReference>
<dbReference type="FunFam" id="3.40.50.11850:FF:000001">
    <property type="entry name" value="2-(3-amino-3-carboxypropyl)histidine synthase subunit 1"/>
    <property type="match status" value="1"/>
</dbReference>
<dbReference type="FunFam" id="3.40.50.11860:FF:000002">
    <property type="entry name" value="2-(3-amino-3-carboxypropyl)histidine synthase subunit 1"/>
    <property type="match status" value="1"/>
</dbReference>
<dbReference type="Gene3D" id="3.40.50.11840">
    <property type="entry name" value="Diphthamide synthesis DPH1/DPH2 domain 1"/>
    <property type="match status" value="1"/>
</dbReference>
<dbReference type="Gene3D" id="3.40.50.11850">
    <property type="entry name" value="Diphthamide synthesis DPH1/DPH2 domain 2"/>
    <property type="match status" value="1"/>
</dbReference>
<dbReference type="Gene3D" id="3.40.50.11860">
    <property type="entry name" value="Diphthamide synthesis DPH1/DPH2 domain 3"/>
    <property type="match status" value="1"/>
</dbReference>
<dbReference type="InterPro" id="IPR016435">
    <property type="entry name" value="DPH1/DPH2"/>
</dbReference>
<dbReference type="InterPro" id="IPR042263">
    <property type="entry name" value="DPH1/DPH2_1"/>
</dbReference>
<dbReference type="InterPro" id="IPR042264">
    <property type="entry name" value="DPH1/DPH2_2"/>
</dbReference>
<dbReference type="InterPro" id="IPR042265">
    <property type="entry name" value="DPH1/DPH2_3"/>
</dbReference>
<dbReference type="InterPro" id="IPR035435">
    <property type="entry name" value="DPH1/DPH2_euk_archaea"/>
</dbReference>
<dbReference type="NCBIfam" id="TIGR00322">
    <property type="entry name" value="diphth2_R"/>
    <property type="match status" value="1"/>
</dbReference>
<dbReference type="PANTHER" id="PTHR10762:SF1">
    <property type="entry name" value="2-(3-AMINO-3-CARBOXYPROPYL)HISTIDINE SYNTHASE SUBUNIT 1"/>
    <property type="match status" value="1"/>
</dbReference>
<dbReference type="PANTHER" id="PTHR10762">
    <property type="entry name" value="DIPHTHAMIDE BIOSYNTHESIS PROTEIN"/>
    <property type="match status" value="1"/>
</dbReference>
<dbReference type="Pfam" id="PF01866">
    <property type="entry name" value="Diphthamide_syn"/>
    <property type="match status" value="1"/>
</dbReference>
<dbReference type="PIRSF" id="PIRSF004967">
    <property type="entry name" value="DPH1"/>
    <property type="match status" value="1"/>
</dbReference>
<dbReference type="SFLD" id="SFLDG01121">
    <property type="entry name" value="Diphthamide_biosynthesis"/>
    <property type="match status" value="1"/>
</dbReference>
<dbReference type="SFLD" id="SFLDS00032">
    <property type="entry name" value="Radical_SAM_3-amino-3-carboxyp"/>
    <property type="match status" value="1"/>
</dbReference>
<gene>
    <name type="primary">DPH1</name>
    <name type="ordered locus">CAGL0G02761g</name>
</gene>
<reference key="1">
    <citation type="journal article" date="2004" name="Nature">
        <title>Genome evolution in yeasts.</title>
        <authorList>
            <person name="Dujon B."/>
            <person name="Sherman D."/>
            <person name="Fischer G."/>
            <person name="Durrens P."/>
            <person name="Casaregola S."/>
            <person name="Lafontaine I."/>
            <person name="de Montigny J."/>
            <person name="Marck C."/>
            <person name="Neuveglise C."/>
            <person name="Talla E."/>
            <person name="Goffard N."/>
            <person name="Frangeul L."/>
            <person name="Aigle M."/>
            <person name="Anthouard V."/>
            <person name="Babour A."/>
            <person name="Barbe V."/>
            <person name="Barnay S."/>
            <person name="Blanchin S."/>
            <person name="Beckerich J.-M."/>
            <person name="Beyne E."/>
            <person name="Bleykasten C."/>
            <person name="Boisrame A."/>
            <person name="Boyer J."/>
            <person name="Cattolico L."/>
            <person name="Confanioleri F."/>
            <person name="de Daruvar A."/>
            <person name="Despons L."/>
            <person name="Fabre E."/>
            <person name="Fairhead C."/>
            <person name="Ferry-Dumazet H."/>
            <person name="Groppi A."/>
            <person name="Hantraye F."/>
            <person name="Hennequin C."/>
            <person name="Jauniaux N."/>
            <person name="Joyet P."/>
            <person name="Kachouri R."/>
            <person name="Kerrest A."/>
            <person name="Koszul R."/>
            <person name="Lemaire M."/>
            <person name="Lesur I."/>
            <person name="Ma L."/>
            <person name="Muller H."/>
            <person name="Nicaud J.-M."/>
            <person name="Nikolski M."/>
            <person name="Oztas S."/>
            <person name="Ozier-Kalogeropoulos O."/>
            <person name="Pellenz S."/>
            <person name="Potier S."/>
            <person name="Richard G.-F."/>
            <person name="Straub M.-L."/>
            <person name="Suleau A."/>
            <person name="Swennen D."/>
            <person name="Tekaia F."/>
            <person name="Wesolowski-Louvel M."/>
            <person name="Westhof E."/>
            <person name="Wirth B."/>
            <person name="Zeniou-Meyer M."/>
            <person name="Zivanovic Y."/>
            <person name="Bolotin-Fukuhara M."/>
            <person name="Thierry A."/>
            <person name="Bouchier C."/>
            <person name="Caudron B."/>
            <person name="Scarpelli C."/>
            <person name="Gaillardin C."/>
            <person name="Weissenbach J."/>
            <person name="Wincker P."/>
            <person name="Souciet J.-L."/>
        </authorList>
    </citation>
    <scope>NUCLEOTIDE SEQUENCE [LARGE SCALE GENOMIC DNA]</scope>
    <source>
        <strain>ATCC 2001 / BCRC 20586 / JCM 3761 / NBRC 0622 / NRRL Y-65 / CBS 138</strain>
    </source>
</reference>
<accession>Q6FTG1</accession>
<keyword id="KW-0963">Cytoplasm</keyword>
<keyword id="KW-0408">Iron</keyword>
<keyword id="KW-0411">Iron-sulfur</keyword>
<keyword id="KW-0479">Metal-binding</keyword>
<keyword id="KW-1185">Reference proteome</keyword>
<keyword id="KW-0949">S-adenosyl-L-methionine</keyword>
<keyword id="KW-0808">Transferase</keyword>
<feature type="chain" id="PRO_0000083370" description="2-(3-amino-3-carboxypropyl)histidine synthase subunit 1">
    <location>
        <begin position="1"/>
        <end position="428"/>
    </location>
</feature>
<feature type="binding site" evidence="1">
    <location>
        <position position="134"/>
    </location>
    <ligand>
        <name>[4Fe-4S] cluster</name>
        <dbReference type="ChEBI" id="CHEBI:49883"/>
    </ligand>
</feature>
<feature type="binding site" evidence="1">
    <location>
        <position position="240"/>
    </location>
    <ligand>
        <name>[4Fe-4S] cluster</name>
        <dbReference type="ChEBI" id="CHEBI:49883"/>
    </ligand>
</feature>
<feature type="binding site" evidence="1">
    <location>
        <position position="369"/>
    </location>
    <ligand>
        <name>[4Fe-4S] cluster</name>
        <dbReference type="ChEBI" id="CHEBI:49883"/>
    </ligand>
</feature>
<sequence length="428" mass="48907">MDNTTEKKEPTKVPRRRFVGKRKTDGKTITTVKADGNEVVRQTKSRVHVGRSLNHIPDDIMEDEELNEAIKLLPQNYNFEIHKTVWNIRKHGAKRVALQMPEGLLIYSLLISDILEQFCNVETVVMGDVSYGACCIDDFTARALDCDFIVHYAHSCLVPIDITEIKVLYVFVTIAIDETHVIKTLQKNFPKGSRLATFGTIQFNPTVHSIKDTLLNDKEHMLYIVTPQIKPLSRGEVLGCTSERLDKNQFDAMVFIGDGRFHLESSMIHNPEIPAFKYDPYNRKFTRERYDQKQLVQVRGEALQVAQKGKVFGLILGALGRQGNVDTVRNLEEKLIKAGKTVVKIILSEIFPQKLAKFDKIDVFVQVACPRLSIDWGYAFPKPLLTPYEANVLLNHDVMFSEEYYPMDYYETNGYGRGRIPEHALVKN</sequence>
<protein>
    <recommendedName>
        <fullName evidence="3">2-(3-amino-3-carboxypropyl)histidine synthase subunit 1</fullName>
        <ecNumber evidence="2">2.5.1.108</ecNumber>
    </recommendedName>
    <alternativeName>
        <fullName>Diphthamide biosynthesis protein 1</fullName>
    </alternativeName>
    <alternativeName>
        <fullName evidence="3">Diphtheria toxin resistance protein 1</fullName>
    </alternativeName>
    <alternativeName>
        <fullName evidence="3">S-adenosyl-L-methionine:L-histidine 3-amino-3-carboxypropyltransferase 1</fullName>
    </alternativeName>
</protein>
<evidence type="ECO:0000250" key="1">
    <source>
        <dbReference type="UniProtKB" id="O58832"/>
    </source>
</evidence>
<evidence type="ECO:0000250" key="2">
    <source>
        <dbReference type="UniProtKB" id="P40487"/>
    </source>
</evidence>
<evidence type="ECO:0000305" key="3"/>
<comment type="function">
    <text evidence="2">Catalyzes the first step of diphthamide biosynthesis, a post-translational modification of histidine which occurs in elongation factor 2. DPH1 and DPH2 transfer a 3-amino-3-carboxypropyl (ACP) group from S-adenosyl-L-methionine (SAM) to a histidine residue, the reaction is assisted by a reduction system comprising DPH3 and a NADH-dependent reductase, predominantly CBR1.</text>
</comment>
<comment type="catalytic activity">
    <reaction evidence="2">
        <text>L-histidyl-[translation elongation factor 2] + S-adenosyl-L-methionine = 2-[(3S)-amino-3-carboxypropyl]-L-histidyl-[translation elongation factor 2] + S-methyl-5'-thioadenosine + H(+)</text>
        <dbReference type="Rhea" id="RHEA:36783"/>
        <dbReference type="Rhea" id="RHEA-COMP:9748"/>
        <dbReference type="Rhea" id="RHEA-COMP:9749"/>
        <dbReference type="ChEBI" id="CHEBI:15378"/>
        <dbReference type="ChEBI" id="CHEBI:17509"/>
        <dbReference type="ChEBI" id="CHEBI:29979"/>
        <dbReference type="ChEBI" id="CHEBI:59789"/>
        <dbReference type="ChEBI" id="CHEBI:73995"/>
        <dbReference type="EC" id="2.5.1.108"/>
    </reaction>
</comment>
<comment type="cofactor">
    <cofactor evidence="2">
        <name>[4Fe-4S] cluster</name>
        <dbReference type="ChEBI" id="CHEBI:49883"/>
    </cofactor>
    <text evidence="2">Binds 1 [4Fe-4S] cluster per subunit. The cluster is coordinated with 3 cysteines and an exchangeable S-adenosyl-L-methionine.</text>
</comment>
<comment type="pathway">
    <text>Protein modification; peptidyl-diphthamide biosynthesis.</text>
</comment>
<comment type="subunit">
    <text evidence="2">Component of the 2-(3-amino-3-carboxypropyl)histidine synthase complex composed of DPH1, DPH2, DPH3 and a NADH-dependent reductase, predominantly CBR1.</text>
</comment>
<comment type="subcellular location">
    <subcellularLocation>
        <location evidence="2">Cytoplasm</location>
    </subcellularLocation>
</comment>
<comment type="similarity">
    <text evidence="3">Belongs to the DPH1/DPH2 family. DPH1 subfamily.</text>
</comment>
<proteinExistence type="inferred from homology"/>
<organism>
    <name type="scientific">Candida glabrata (strain ATCC 2001 / BCRC 20586 / JCM 3761 / NBRC 0622 / NRRL Y-65 / CBS 138)</name>
    <name type="common">Yeast</name>
    <name type="synonym">Nakaseomyces glabratus</name>
    <dbReference type="NCBI Taxonomy" id="284593"/>
    <lineage>
        <taxon>Eukaryota</taxon>
        <taxon>Fungi</taxon>
        <taxon>Dikarya</taxon>
        <taxon>Ascomycota</taxon>
        <taxon>Saccharomycotina</taxon>
        <taxon>Saccharomycetes</taxon>
        <taxon>Saccharomycetales</taxon>
        <taxon>Saccharomycetaceae</taxon>
        <taxon>Nakaseomyces</taxon>
    </lineage>
</organism>